<reference key="1">
    <citation type="submission" date="2008-03" db="EMBL/GenBank/DDBJ databases">
        <title>Complete sequence of Thermoproteus neutrophilus V24Sta.</title>
        <authorList>
            <consortium name="US DOE Joint Genome Institute"/>
            <person name="Copeland A."/>
            <person name="Lucas S."/>
            <person name="Lapidus A."/>
            <person name="Glavina del Rio T."/>
            <person name="Dalin E."/>
            <person name="Tice H."/>
            <person name="Bruce D."/>
            <person name="Goodwin L."/>
            <person name="Pitluck S."/>
            <person name="Sims D."/>
            <person name="Brettin T."/>
            <person name="Detter J.C."/>
            <person name="Han C."/>
            <person name="Kuske C.R."/>
            <person name="Schmutz J."/>
            <person name="Larimer F."/>
            <person name="Land M."/>
            <person name="Hauser L."/>
            <person name="Kyrpides N."/>
            <person name="Mikhailova N."/>
            <person name="Biddle J.F."/>
            <person name="Zhang Z."/>
            <person name="Fitz-Gibbon S.T."/>
            <person name="Lowe T.M."/>
            <person name="Saltikov C."/>
            <person name="House C.H."/>
            <person name="Richardson P."/>
        </authorList>
    </citation>
    <scope>NUCLEOTIDE SEQUENCE [LARGE SCALE GENOMIC DNA]</scope>
    <source>
        <strain>DSM 2338 / JCM 9278 / NBRC 100436 / V24Sta</strain>
    </source>
</reference>
<keyword id="KW-0396">Initiation factor</keyword>
<keyword id="KW-0648">Protein biosynthesis</keyword>
<feature type="chain" id="PRO_1000100488" description="Translation initiation factor 2 subunit beta">
    <location>
        <begin position="1"/>
        <end position="134"/>
    </location>
</feature>
<gene>
    <name evidence="1" type="primary">eif2b</name>
    <name type="ordered locus">Tneu_0538</name>
</gene>
<accession>B1YCG8</accession>
<evidence type="ECO:0000255" key="1">
    <source>
        <dbReference type="HAMAP-Rule" id="MF_00232"/>
    </source>
</evidence>
<comment type="function">
    <text evidence="1">eIF-2 functions in the early steps of protein synthesis by forming a ternary complex with GTP and initiator tRNA.</text>
</comment>
<comment type="subunit">
    <text evidence="1">Heterotrimer composed of an alpha, a beta and a gamma chain.</text>
</comment>
<comment type="similarity">
    <text evidence="1">Belongs to the eIF-2-beta/eIF-5 family.</text>
</comment>
<sequence length="134" mass="15456">MDEEYIALLDRAYKLVAPKAQRRAEIPKIEVQNMPRKTVIPNFGQIAKRLNRDIYFMAKFFQRELAVPGTVEGDVFTLHGEKSPKVVEAVYERFIRYYVVCPVCNSIDTELRREGRIYVMRCLACGASTPVKPL</sequence>
<organism>
    <name type="scientific">Pyrobaculum neutrophilum (strain DSM 2338 / JCM 9278 / NBRC 100436 / V24Sta)</name>
    <name type="common">Thermoproteus neutrophilus</name>
    <dbReference type="NCBI Taxonomy" id="444157"/>
    <lineage>
        <taxon>Archaea</taxon>
        <taxon>Thermoproteota</taxon>
        <taxon>Thermoprotei</taxon>
        <taxon>Thermoproteales</taxon>
        <taxon>Thermoproteaceae</taxon>
        <taxon>Pyrobaculum</taxon>
    </lineage>
</organism>
<name>IF2B_PYRNV</name>
<dbReference type="EMBL" id="CP001014">
    <property type="protein sequence ID" value="ACB39481.1"/>
    <property type="molecule type" value="Genomic_DNA"/>
</dbReference>
<dbReference type="RefSeq" id="WP_012349901.1">
    <property type="nucleotide sequence ID" value="NC_010525.1"/>
</dbReference>
<dbReference type="SMR" id="B1YCG8"/>
<dbReference type="STRING" id="444157.Tneu_0538"/>
<dbReference type="GeneID" id="6165732"/>
<dbReference type="KEGG" id="tne:Tneu_0538"/>
<dbReference type="eggNOG" id="arCOG01640">
    <property type="taxonomic scope" value="Archaea"/>
</dbReference>
<dbReference type="HOGENOM" id="CLU_026663_3_1_2"/>
<dbReference type="OrthoDB" id="38099at2157"/>
<dbReference type="Proteomes" id="UP000001694">
    <property type="component" value="Chromosome"/>
</dbReference>
<dbReference type="GO" id="GO:0003743">
    <property type="term" value="F:translation initiation factor activity"/>
    <property type="evidence" value="ECO:0007669"/>
    <property type="project" value="UniProtKB-UniRule"/>
</dbReference>
<dbReference type="Gene3D" id="3.30.30.170">
    <property type="match status" value="1"/>
</dbReference>
<dbReference type="HAMAP" id="MF_00232">
    <property type="entry name" value="eIF_2_beta"/>
    <property type="match status" value="1"/>
</dbReference>
<dbReference type="InterPro" id="IPR045196">
    <property type="entry name" value="IF2/IF5"/>
</dbReference>
<dbReference type="InterPro" id="IPR004458">
    <property type="entry name" value="TIF2_bsu_arc"/>
</dbReference>
<dbReference type="InterPro" id="IPR002735">
    <property type="entry name" value="Transl_init_fac_IF2/IF5_dom"/>
</dbReference>
<dbReference type="InterPro" id="IPR016189">
    <property type="entry name" value="Transl_init_fac_IF2/IF5_N"/>
</dbReference>
<dbReference type="InterPro" id="IPR016190">
    <property type="entry name" value="Transl_init_fac_IF2/IF5_Zn-bd"/>
</dbReference>
<dbReference type="NCBIfam" id="NF003067">
    <property type="entry name" value="PRK03988.1"/>
    <property type="match status" value="1"/>
</dbReference>
<dbReference type="PANTHER" id="PTHR23001">
    <property type="entry name" value="EUKARYOTIC TRANSLATION INITIATION FACTOR"/>
    <property type="match status" value="1"/>
</dbReference>
<dbReference type="PANTHER" id="PTHR23001:SF3">
    <property type="entry name" value="EUKARYOTIC TRANSLATION INITIATION FACTOR 2 SUBUNIT 2"/>
    <property type="match status" value="1"/>
</dbReference>
<dbReference type="Pfam" id="PF01873">
    <property type="entry name" value="eIF-5_eIF-2B"/>
    <property type="match status" value="1"/>
</dbReference>
<dbReference type="SMART" id="SM00653">
    <property type="entry name" value="eIF2B_5"/>
    <property type="match status" value="1"/>
</dbReference>
<dbReference type="SUPFAM" id="SSF100966">
    <property type="entry name" value="Translation initiation factor 2 beta, aIF2beta, N-terminal domain"/>
    <property type="match status" value="1"/>
</dbReference>
<dbReference type="SUPFAM" id="SSF75689">
    <property type="entry name" value="Zinc-binding domain of translation initiation factor 2 beta"/>
    <property type="match status" value="1"/>
</dbReference>
<proteinExistence type="inferred from homology"/>
<protein>
    <recommendedName>
        <fullName evidence="1">Translation initiation factor 2 subunit beta</fullName>
    </recommendedName>
    <alternativeName>
        <fullName evidence="1">aIF2-beta</fullName>
    </alternativeName>
    <alternativeName>
        <fullName evidence="1">eIF-2-beta</fullName>
    </alternativeName>
</protein>